<keyword id="KW-0067">ATP-binding</keyword>
<keyword id="KW-0997">Cell inner membrane</keyword>
<keyword id="KW-1003">Cell membrane</keyword>
<keyword id="KW-0963">Cytoplasm</keyword>
<keyword id="KW-0472">Membrane</keyword>
<keyword id="KW-0479">Metal-binding</keyword>
<keyword id="KW-0547">Nucleotide-binding</keyword>
<keyword id="KW-0653">Protein transport</keyword>
<keyword id="KW-1185">Reference proteome</keyword>
<keyword id="KW-1278">Translocase</keyword>
<keyword id="KW-0811">Translocation</keyword>
<keyword id="KW-0813">Transport</keyword>
<keyword id="KW-0862">Zinc</keyword>
<dbReference type="EC" id="7.4.2.8" evidence="1"/>
<dbReference type="EMBL" id="AM286690">
    <property type="protein sequence ID" value="CAL16055.1"/>
    <property type="molecule type" value="Genomic_DNA"/>
</dbReference>
<dbReference type="RefSeq" id="WP_011587892.1">
    <property type="nucleotide sequence ID" value="NC_008260.1"/>
</dbReference>
<dbReference type="SMR" id="Q0VRZ3"/>
<dbReference type="STRING" id="393595.ABO_0607"/>
<dbReference type="KEGG" id="abo:ABO_0607"/>
<dbReference type="eggNOG" id="COG0653">
    <property type="taxonomic scope" value="Bacteria"/>
</dbReference>
<dbReference type="HOGENOM" id="CLU_005314_3_0_6"/>
<dbReference type="OrthoDB" id="9805579at2"/>
<dbReference type="Proteomes" id="UP000008871">
    <property type="component" value="Chromosome"/>
</dbReference>
<dbReference type="GO" id="GO:0031522">
    <property type="term" value="C:cell envelope Sec protein transport complex"/>
    <property type="evidence" value="ECO:0007669"/>
    <property type="project" value="TreeGrafter"/>
</dbReference>
<dbReference type="GO" id="GO:0005829">
    <property type="term" value="C:cytosol"/>
    <property type="evidence" value="ECO:0007669"/>
    <property type="project" value="TreeGrafter"/>
</dbReference>
<dbReference type="GO" id="GO:0005886">
    <property type="term" value="C:plasma membrane"/>
    <property type="evidence" value="ECO:0007669"/>
    <property type="project" value="UniProtKB-SubCell"/>
</dbReference>
<dbReference type="GO" id="GO:0005524">
    <property type="term" value="F:ATP binding"/>
    <property type="evidence" value="ECO:0007669"/>
    <property type="project" value="UniProtKB-UniRule"/>
</dbReference>
<dbReference type="GO" id="GO:0046872">
    <property type="term" value="F:metal ion binding"/>
    <property type="evidence" value="ECO:0007669"/>
    <property type="project" value="UniProtKB-KW"/>
</dbReference>
<dbReference type="GO" id="GO:0008564">
    <property type="term" value="F:protein-exporting ATPase activity"/>
    <property type="evidence" value="ECO:0007669"/>
    <property type="project" value="UniProtKB-EC"/>
</dbReference>
<dbReference type="GO" id="GO:0065002">
    <property type="term" value="P:intracellular protein transmembrane transport"/>
    <property type="evidence" value="ECO:0007669"/>
    <property type="project" value="UniProtKB-UniRule"/>
</dbReference>
<dbReference type="GO" id="GO:0017038">
    <property type="term" value="P:protein import"/>
    <property type="evidence" value="ECO:0007669"/>
    <property type="project" value="InterPro"/>
</dbReference>
<dbReference type="GO" id="GO:0006605">
    <property type="term" value="P:protein targeting"/>
    <property type="evidence" value="ECO:0007669"/>
    <property type="project" value="UniProtKB-UniRule"/>
</dbReference>
<dbReference type="GO" id="GO:0043952">
    <property type="term" value="P:protein transport by the Sec complex"/>
    <property type="evidence" value="ECO:0007669"/>
    <property type="project" value="TreeGrafter"/>
</dbReference>
<dbReference type="CDD" id="cd17928">
    <property type="entry name" value="DEXDc_SecA"/>
    <property type="match status" value="1"/>
</dbReference>
<dbReference type="CDD" id="cd18803">
    <property type="entry name" value="SF2_C_secA"/>
    <property type="match status" value="1"/>
</dbReference>
<dbReference type="FunFam" id="3.40.50.300:FF:000113">
    <property type="entry name" value="Preprotein translocase subunit SecA"/>
    <property type="match status" value="1"/>
</dbReference>
<dbReference type="FunFam" id="3.90.1440.10:FF:000001">
    <property type="entry name" value="Preprotein translocase subunit SecA"/>
    <property type="match status" value="1"/>
</dbReference>
<dbReference type="FunFam" id="1.10.3060.10:FF:000003">
    <property type="entry name" value="Protein translocase subunit SecA"/>
    <property type="match status" value="1"/>
</dbReference>
<dbReference type="FunFam" id="3.40.50.300:FF:000334">
    <property type="entry name" value="Protein translocase subunit SecA"/>
    <property type="match status" value="1"/>
</dbReference>
<dbReference type="Gene3D" id="1.10.3060.10">
    <property type="entry name" value="Helical scaffold and wing domains of SecA"/>
    <property type="match status" value="1"/>
</dbReference>
<dbReference type="Gene3D" id="3.40.50.300">
    <property type="entry name" value="P-loop containing nucleotide triphosphate hydrolases"/>
    <property type="match status" value="2"/>
</dbReference>
<dbReference type="Gene3D" id="3.90.1440.10">
    <property type="entry name" value="SecA, preprotein cross-linking domain"/>
    <property type="match status" value="1"/>
</dbReference>
<dbReference type="HAMAP" id="MF_01382">
    <property type="entry name" value="SecA"/>
    <property type="match status" value="1"/>
</dbReference>
<dbReference type="InterPro" id="IPR014001">
    <property type="entry name" value="Helicase_ATP-bd"/>
</dbReference>
<dbReference type="InterPro" id="IPR001650">
    <property type="entry name" value="Helicase_C-like"/>
</dbReference>
<dbReference type="InterPro" id="IPR027417">
    <property type="entry name" value="P-loop_NTPase"/>
</dbReference>
<dbReference type="InterPro" id="IPR004027">
    <property type="entry name" value="SEC_C_motif"/>
</dbReference>
<dbReference type="InterPro" id="IPR000185">
    <property type="entry name" value="SecA"/>
</dbReference>
<dbReference type="InterPro" id="IPR020937">
    <property type="entry name" value="SecA_CS"/>
</dbReference>
<dbReference type="InterPro" id="IPR011115">
    <property type="entry name" value="SecA_DEAD"/>
</dbReference>
<dbReference type="InterPro" id="IPR014018">
    <property type="entry name" value="SecA_motor_DEAD"/>
</dbReference>
<dbReference type="InterPro" id="IPR011130">
    <property type="entry name" value="SecA_preprotein_X-link_dom"/>
</dbReference>
<dbReference type="InterPro" id="IPR044722">
    <property type="entry name" value="SecA_SF2_C"/>
</dbReference>
<dbReference type="InterPro" id="IPR011116">
    <property type="entry name" value="SecA_Wing/Scaffold"/>
</dbReference>
<dbReference type="InterPro" id="IPR036266">
    <property type="entry name" value="SecA_Wing/Scaffold_sf"/>
</dbReference>
<dbReference type="InterPro" id="IPR036670">
    <property type="entry name" value="SecA_X-link_sf"/>
</dbReference>
<dbReference type="NCBIfam" id="NF009538">
    <property type="entry name" value="PRK12904.1"/>
    <property type="match status" value="1"/>
</dbReference>
<dbReference type="NCBIfam" id="TIGR00963">
    <property type="entry name" value="secA"/>
    <property type="match status" value="1"/>
</dbReference>
<dbReference type="PANTHER" id="PTHR30612:SF0">
    <property type="entry name" value="CHLOROPLAST PROTEIN-TRANSPORTING ATPASE"/>
    <property type="match status" value="1"/>
</dbReference>
<dbReference type="PANTHER" id="PTHR30612">
    <property type="entry name" value="SECA INNER MEMBRANE COMPONENT OF SEC PROTEIN SECRETION SYSTEM"/>
    <property type="match status" value="1"/>
</dbReference>
<dbReference type="Pfam" id="PF21090">
    <property type="entry name" value="P-loop_SecA"/>
    <property type="match status" value="1"/>
</dbReference>
<dbReference type="Pfam" id="PF02810">
    <property type="entry name" value="SEC-C"/>
    <property type="match status" value="1"/>
</dbReference>
<dbReference type="Pfam" id="PF07517">
    <property type="entry name" value="SecA_DEAD"/>
    <property type="match status" value="1"/>
</dbReference>
<dbReference type="Pfam" id="PF01043">
    <property type="entry name" value="SecA_PP_bind"/>
    <property type="match status" value="1"/>
</dbReference>
<dbReference type="Pfam" id="PF07516">
    <property type="entry name" value="SecA_SW"/>
    <property type="match status" value="1"/>
</dbReference>
<dbReference type="PRINTS" id="PR00906">
    <property type="entry name" value="SECA"/>
</dbReference>
<dbReference type="SMART" id="SM00957">
    <property type="entry name" value="SecA_DEAD"/>
    <property type="match status" value="1"/>
</dbReference>
<dbReference type="SMART" id="SM00958">
    <property type="entry name" value="SecA_PP_bind"/>
    <property type="match status" value="1"/>
</dbReference>
<dbReference type="SUPFAM" id="SSF81886">
    <property type="entry name" value="Helical scaffold and wing domains of SecA"/>
    <property type="match status" value="1"/>
</dbReference>
<dbReference type="SUPFAM" id="SSF52540">
    <property type="entry name" value="P-loop containing nucleoside triphosphate hydrolases"/>
    <property type="match status" value="2"/>
</dbReference>
<dbReference type="SUPFAM" id="SSF81767">
    <property type="entry name" value="Pre-protein crosslinking domain of SecA"/>
    <property type="match status" value="1"/>
</dbReference>
<dbReference type="PROSITE" id="PS01312">
    <property type="entry name" value="SECA"/>
    <property type="match status" value="1"/>
</dbReference>
<dbReference type="PROSITE" id="PS51196">
    <property type="entry name" value="SECA_MOTOR_DEAD"/>
    <property type="match status" value="1"/>
</dbReference>
<accession>Q0VRZ3</accession>
<reference key="1">
    <citation type="journal article" date="2006" name="Nat. Biotechnol.">
        <title>Genome sequence of the ubiquitous hydrocarbon-degrading marine bacterium Alcanivorax borkumensis.</title>
        <authorList>
            <person name="Schneiker S."/>
            <person name="Martins dos Santos V.A.P."/>
            <person name="Bartels D."/>
            <person name="Bekel T."/>
            <person name="Brecht M."/>
            <person name="Buhrmester J."/>
            <person name="Chernikova T.N."/>
            <person name="Denaro R."/>
            <person name="Ferrer M."/>
            <person name="Gertler C."/>
            <person name="Goesmann A."/>
            <person name="Golyshina O.V."/>
            <person name="Kaminski F."/>
            <person name="Khachane A.N."/>
            <person name="Lang S."/>
            <person name="Linke B."/>
            <person name="McHardy A.C."/>
            <person name="Meyer F."/>
            <person name="Nechitaylo T."/>
            <person name="Puehler A."/>
            <person name="Regenhardt D."/>
            <person name="Rupp O."/>
            <person name="Sabirova J.S."/>
            <person name="Selbitschka W."/>
            <person name="Yakimov M.M."/>
            <person name="Timmis K.N."/>
            <person name="Vorhoelter F.-J."/>
            <person name="Weidner S."/>
            <person name="Kaiser O."/>
            <person name="Golyshin P.N."/>
        </authorList>
    </citation>
    <scope>NUCLEOTIDE SEQUENCE [LARGE SCALE GENOMIC DNA]</scope>
    <source>
        <strain>ATCC 700651 / DSM 11573 / NCIMB 13689 / SK2</strain>
    </source>
</reference>
<sequence length="907" mass="102948">MLGTIVKKIIGTKNDRELKRMAKLVDAINSHAEAMAQLTDGDLQHKTEAFRQAFKDGKTLDELLPEAFAVVREASTRVMGMRHFDVQMMGGISLHEGRISEMRTGEGKTLTATLPAYLNALSGEGVHVVTVNDYLAERDANWMRPLYEFLGLSVGIILSQQPTEHKRAAYAADITYGTNNEYGFDYLRDNMAFRLEDRVQRGLNYAIVDEVDSILIDEARTPLIISGPAADSSELYQAVNLLMPQLQKQEEEGEGDYFIDEKQRQVELTEAGHQKIEALLVNNQLLEQGESLYAAHNLALLHHVHAALKAHALFHIDRDYIVQDGQIVIVDEHTGRTMPGRRWSEGIHQAIEAKEGLNIQQENQTLASTTFQNYFRLYNKLSGMTGTADTEALEFRQIYGMDVVVVPTNKPMVRVDANDLVYLSLQEKFDAIVKEVTEAVAKGAPVLVGTATIEASEYLSKRLKQDKVHHEVLNAKFHQREAQIIAQAGRPGAVTIATNMAGRGTDIMLGGNPEEQIKHMETPSESEAEKIRAEWQANHDTVMKAGGLHIIGTERHESRRIDNQLRGRAGRQGDPGYTRFFLSMEDDLMRIFASDKIRNLMRSLGLENGEAIEHRWVTRAIENAQRKVEGRNFDIRKNLLEYDNVANDQRQVIYGQRDQILEAADLVNSVKGIRRDVITELVHDYMAPGSVEDQWDIPGLEKTLEAEFQCHAPVGQWLNEDNQLHIEGLIDKLVESMDEDYQRKEAEIGTEDLRKIEKHLMLQILDRHWKEHLANMDHLRQGIHLRGYAQKNPKQEYKKEAFELFQGLLNQIQHELIRVLHSLQVRRDDEVERLEQQREEEAREQAEKMKMQTVAEPGTDGSAQPQPSQQQGEQPKTMVRNGRKVGRNEPCPCGSGKKYKQCHGKIE</sequence>
<evidence type="ECO:0000255" key="1">
    <source>
        <dbReference type="HAMAP-Rule" id="MF_01382"/>
    </source>
</evidence>
<evidence type="ECO:0000256" key="2">
    <source>
        <dbReference type="SAM" id="MobiDB-lite"/>
    </source>
</evidence>
<gene>
    <name evidence="1" type="primary">secA</name>
    <name type="ordered locus">ABO_0607</name>
</gene>
<proteinExistence type="inferred from homology"/>
<protein>
    <recommendedName>
        <fullName evidence="1">Protein translocase subunit SecA</fullName>
        <ecNumber evidence="1">7.4.2.8</ecNumber>
    </recommendedName>
</protein>
<name>SECA_ALCBS</name>
<comment type="function">
    <text evidence="1">Part of the Sec protein translocase complex. Interacts with the SecYEG preprotein conducting channel. Has a central role in coupling the hydrolysis of ATP to the transfer of proteins into and across the cell membrane, serving both as a receptor for the preprotein-SecB complex and as an ATP-driven molecular motor driving the stepwise translocation of polypeptide chains across the membrane.</text>
</comment>
<comment type="catalytic activity">
    <reaction evidence="1">
        <text>ATP + H2O + cellular proteinSide 1 = ADP + phosphate + cellular proteinSide 2.</text>
        <dbReference type="EC" id="7.4.2.8"/>
    </reaction>
</comment>
<comment type="cofactor">
    <cofactor evidence="1">
        <name>Zn(2+)</name>
        <dbReference type="ChEBI" id="CHEBI:29105"/>
    </cofactor>
    <text evidence="1">May bind 1 zinc ion per subunit.</text>
</comment>
<comment type="subunit">
    <text evidence="1">Monomer and homodimer. Part of the essential Sec protein translocation apparatus which comprises SecA, SecYEG and auxiliary proteins SecDF-YajC and YidC.</text>
</comment>
<comment type="subcellular location">
    <subcellularLocation>
        <location evidence="1">Cell inner membrane</location>
        <topology evidence="1">Peripheral membrane protein</topology>
        <orientation evidence="1">Cytoplasmic side</orientation>
    </subcellularLocation>
    <subcellularLocation>
        <location evidence="1">Cytoplasm</location>
    </subcellularLocation>
    <text evidence="1">Distribution is 50-50.</text>
</comment>
<comment type="similarity">
    <text evidence="1">Belongs to the SecA family.</text>
</comment>
<organism>
    <name type="scientific">Alcanivorax borkumensis (strain ATCC 700651 / DSM 11573 / NCIMB 13689 / SK2)</name>
    <dbReference type="NCBI Taxonomy" id="393595"/>
    <lineage>
        <taxon>Bacteria</taxon>
        <taxon>Pseudomonadati</taxon>
        <taxon>Pseudomonadota</taxon>
        <taxon>Gammaproteobacteria</taxon>
        <taxon>Oceanospirillales</taxon>
        <taxon>Alcanivoracaceae</taxon>
        <taxon>Alcanivorax</taxon>
    </lineage>
</organism>
<feature type="chain" id="PRO_0000320718" description="Protein translocase subunit SecA">
    <location>
        <begin position="1"/>
        <end position="907"/>
    </location>
</feature>
<feature type="region of interest" description="Disordered" evidence="2">
    <location>
        <begin position="834"/>
        <end position="907"/>
    </location>
</feature>
<feature type="compositionally biased region" description="Basic and acidic residues" evidence="2">
    <location>
        <begin position="834"/>
        <end position="850"/>
    </location>
</feature>
<feature type="compositionally biased region" description="Low complexity" evidence="2">
    <location>
        <begin position="864"/>
        <end position="875"/>
    </location>
</feature>
<feature type="compositionally biased region" description="Basic residues" evidence="2">
    <location>
        <begin position="897"/>
        <end position="907"/>
    </location>
</feature>
<feature type="binding site" evidence="1">
    <location>
        <position position="87"/>
    </location>
    <ligand>
        <name>ATP</name>
        <dbReference type="ChEBI" id="CHEBI:30616"/>
    </ligand>
</feature>
<feature type="binding site" evidence="1">
    <location>
        <begin position="105"/>
        <end position="109"/>
    </location>
    <ligand>
        <name>ATP</name>
        <dbReference type="ChEBI" id="CHEBI:30616"/>
    </ligand>
</feature>
<feature type="binding site" evidence="1">
    <location>
        <position position="506"/>
    </location>
    <ligand>
        <name>ATP</name>
        <dbReference type="ChEBI" id="CHEBI:30616"/>
    </ligand>
</feature>
<feature type="binding site" evidence="1">
    <location>
        <position position="891"/>
    </location>
    <ligand>
        <name>Zn(2+)</name>
        <dbReference type="ChEBI" id="CHEBI:29105"/>
    </ligand>
</feature>
<feature type="binding site" evidence="1">
    <location>
        <position position="893"/>
    </location>
    <ligand>
        <name>Zn(2+)</name>
        <dbReference type="ChEBI" id="CHEBI:29105"/>
    </ligand>
</feature>
<feature type="binding site" evidence="1">
    <location>
        <position position="902"/>
    </location>
    <ligand>
        <name>Zn(2+)</name>
        <dbReference type="ChEBI" id="CHEBI:29105"/>
    </ligand>
</feature>
<feature type="binding site" evidence="1">
    <location>
        <position position="903"/>
    </location>
    <ligand>
        <name>Zn(2+)</name>
        <dbReference type="ChEBI" id="CHEBI:29105"/>
    </ligand>
</feature>